<organism>
    <name type="scientific">Cryptococcus neoformans var. neoformans serotype D (strain B-3501A)</name>
    <name type="common">Filobasidiella neoformans</name>
    <dbReference type="NCBI Taxonomy" id="283643"/>
    <lineage>
        <taxon>Eukaryota</taxon>
        <taxon>Fungi</taxon>
        <taxon>Dikarya</taxon>
        <taxon>Basidiomycota</taxon>
        <taxon>Agaricomycotina</taxon>
        <taxon>Tremellomycetes</taxon>
        <taxon>Tremellales</taxon>
        <taxon>Cryptococcaceae</taxon>
        <taxon>Cryptococcus</taxon>
        <taxon>Cryptococcus neoformans species complex</taxon>
    </lineage>
</organism>
<protein>
    <recommendedName>
        <fullName>Leucine carboxyl methyltransferase 1</fullName>
        <ecNumber>2.1.1.233</ecNumber>
    </recommendedName>
    <alternativeName>
        <fullName>Protein phosphatase methyltransferase 1</fullName>
    </alternativeName>
    <alternativeName>
        <fullName>[Phosphatase 2A protein]-leucine-carboxy methyltransferase 1</fullName>
    </alternativeName>
</protein>
<accession>P0CO57</accession>
<accession>Q55YC2</accession>
<accession>Q5KLL9</accession>
<comment type="function">
    <text evidence="1">Methylates the carboxyl group of the C-terminal leucine residue of protein phosphatase 2A catalytic subunits to form alpha-leucine ester residues.</text>
</comment>
<comment type="catalytic activity">
    <reaction>
        <text>[phosphatase 2A protein]-C-terminal L-leucine + S-adenosyl-L-methionine = [phosphatase 2A protein]-C-terminal L-leucine methyl ester + S-adenosyl-L-homocysteine</text>
        <dbReference type="Rhea" id="RHEA:48544"/>
        <dbReference type="Rhea" id="RHEA-COMP:12134"/>
        <dbReference type="Rhea" id="RHEA-COMP:12135"/>
        <dbReference type="ChEBI" id="CHEBI:57856"/>
        <dbReference type="ChEBI" id="CHEBI:59789"/>
        <dbReference type="ChEBI" id="CHEBI:90516"/>
        <dbReference type="ChEBI" id="CHEBI:90517"/>
        <dbReference type="EC" id="2.1.1.233"/>
    </reaction>
</comment>
<comment type="similarity">
    <text evidence="3">Belongs to the methyltransferase superfamily. LCMT family.</text>
</comment>
<name>LCMT1_CRYNB</name>
<proteinExistence type="inferred from homology"/>
<gene>
    <name type="primary">PPM1</name>
    <name type="ordered locus">CNBB0940</name>
</gene>
<feature type="chain" id="PRO_0000410134" description="Leucine carboxyl methyltransferase 1">
    <location>
        <begin position="1"/>
        <end position="397"/>
    </location>
</feature>
<feature type="region of interest" description="Disordered" evidence="2">
    <location>
        <begin position="17"/>
        <end position="61"/>
    </location>
</feature>
<feature type="compositionally biased region" description="Low complexity" evidence="2">
    <location>
        <begin position="26"/>
        <end position="43"/>
    </location>
</feature>
<feature type="compositionally biased region" description="Basic residues" evidence="2">
    <location>
        <begin position="44"/>
        <end position="55"/>
    </location>
</feature>
<feature type="binding site" evidence="1">
    <location>
        <position position="119"/>
    </location>
    <ligand>
        <name>S-adenosyl-L-methionine</name>
        <dbReference type="ChEBI" id="CHEBI:59789"/>
    </ligand>
</feature>
<feature type="binding site" evidence="1">
    <location>
        <position position="142"/>
    </location>
    <ligand>
        <name>S-adenosyl-L-methionine</name>
        <dbReference type="ChEBI" id="CHEBI:59789"/>
    </ligand>
</feature>
<feature type="binding site" evidence="1">
    <location>
        <position position="168"/>
    </location>
    <ligand>
        <name>S-adenosyl-L-methionine</name>
        <dbReference type="ChEBI" id="CHEBI:59789"/>
    </ligand>
</feature>
<feature type="binding site" evidence="1">
    <location>
        <begin position="224"/>
        <end position="225"/>
    </location>
    <ligand>
        <name>S-adenosyl-L-methionine</name>
        <dbReference type="ChEBI" id="CHEBI:59789"/>
    </ligand>
</feature>
<feature type="binding site" evidence="1">
    <location>
        <position position="259"/>
    </location>
    <ligand>
        <name>S-adenosyl-L-methionine</name>
        <dbReference type="ChEBI" id="CHEBI:59789"/>
    </ligand>
</feature>
<dbReference type="EC" id="2.1.1.233"/>
<dbReference type="EMBL" id="AAEY01000007">
    <property type="protein sequence ID" value="EAL22644.1"/>
    <property type="molecule type" value="Genomic_DNA"/>
</dbReference>
<dbReference type="RefSeq" id="XP_777291.1">
    <property type="nucleotide sequence ID" value="XM_772198.1"/>
</dbReference>
<dbReference type="SMR" id="P0CO57"/>
<dbReference type="GeneID" id="4934184"/>
<dbReference type="KEGG" id="cnb:CNBB0940"/>
<dbReference type="VEuPathDB" id="FungiDB:CNBB0940"/>
<dbReference type="HOGENOM" id="CLU_031312_1_0_1"/>
<dbReference type="OrthoDB" id="4849at5206"/>
<dbReference type="GO" id="GO:0018423">
    <property type="term" value="F:protein C-terminal leucine carboxyl O-methyltransferase activity"/>
    <property type="evidence" value="ECO:0007669"/>
    <property type="project" value="UniProtKB-EC"/>
</dbReference>
<dbReference type="GO" id="GO:0032259">
    <property type="term" value="P:methylation"/>
    <property type="evidence" value="ECO:0007669"/>
    <property type="project" value="UniProtKB-KW"/>
</dbReference>
<dbReference type="Gene3D" id="3.40.50.150">
    <property type="entry name" value="Vaccinia Virus protein VP39"/>
    <property type="match status" value="1"/>
</dbReference>
<dbReference type="InterPro" id="IPR016651">
    <property type="entry name" value="LCMT1"/>
</dbReference>
<dbReference type="InterPro" id="IPR007213">
    <property type="entry name" value="Ppm1/Ppm2/Tcmp"/>
</dbReference>
<dbReference type="InterPro" id="IPR029063">
    <property type="entry name" value="SAM-dependent_MTases_sf"/>
</dbReference>
<dbReference type="PANTHER" id="PTHR13600">
    <property type="entry name" value="LEUCINE CARBOXYL METHYLTRANSFERASE"/>
    <property type="match status" value="1"/>
</dbReference>
<dbReference type="PANTHER" id="PTHR13600:SF21">
    <property type="entry name" value="LEUCINE CARBOXYL METHYLTRANSFERASE 1"/>
    <property type="match status" value="1"/>
</dbReference>
<dbReference type="Pfam" id="PF04072">
    <property type="entry name" value="LCM"/>
    <property type="match status" value="1"/>
</dbReference>
<dbReference type="PIRSF" id="PIRSF016305">
    <property type="entry name" value="LCM_mtfrase"/>
    <property type="match status" value="1"/>
</dbReference>
<dbReference type="SUPFAM" id="SSF53335">
    <property type="entry name" value="S-adenosyl-L-methionine-dependent methyltransferases"/>
    <property type="match status" value="1"/>
</dbReference>
<sequence>MTQCGDRRLFALNYHGAIQTPPPTDPNAAPAHRPAPRPALGRCRPPHRRRRRLRPPVRPPLSLPVALTTRSSAAQVGYLQDPFASLLYRPPMPQPGAFAPQAVGRARKPPLINVGTHHRTWGIDRLVDRFLQRGGKQVVSLGAGSDTRFWRLMSRATPPDLARYVEIDFPHLTSPKAQRIARHRKLYQYLGPSSTAMPPPGHPYTVSKGGTQLSSPLYTLLPLDLRPSPSEPASSISAILSHHVLPQLDPRLPTLFLAECLFPYMSPEDSREIIKWFGETFCSCMGVVYEMVGLDDSFGNVMKRNLAVRNLSIPGSIFSTPESQAGRFTSPMLQGGKFDSAGAKTLWQIREEDVGPEELQRISKLEILDEIEELRLVLEHYVIAWGTKGECMSSISL</sequence>
<reference key="1">
    <citation type="journal article" date="2005" name="Science">
        <title>The genome of the basidiomycetous yeast and human pathogen Cryptococcus neoformans.</title>
        <authorList>
            <person name="Loftus B.J."/>
            <person name="Fung E."/>
            <person name="Roncaglia P."/>
            <person name="Rowley D."/>
            <person name="Amedeo P."/>
            <person name="Bruno D."/>
            <person name="Vamathevan J."/>
            <person name="Miranda M."/>
            <person name="Anderson I.J."/>
            <person name="Fraser J.A."/>
            <person name="Allen J.E."/>
            <person name="Bosdet I.E."/>
            <person name="Brent M.R."/>
            <person name="Chiu R."/>
            <person name="Doering T.L."/>
            <person name="Donlin M.J."/>
            <person name="D'Souza C.A."/>
            <person name="Fox D.S."/>
            <person name="Grinberg V."/>
            <person name="Fu J."/>
            <person name="Fukushima M."/>
            <person name="Haas B.J."/>
            <person name="Huang J.C."/>
            <person name="Janbon G."/>
            <person name="Jones S.J.M."/>
            <person name="Koo H.L."/>
            <person name="Krzywinski M.I."/>
            <person name="Kwon-Chung K.J."/>
            <person name="Lengeler K.B."/>
            <person name="Maiti R."/>
            <person name="Marra M.A."/>
            <person name="Marra R.E."/>
            <person name="Mathewson C.A."/>
            <person name="Mitchell T.G."/>
            <person name="Pertea M."/>
            <person name="Riggs F.R."/>
            <person name="Salzberg S.L."/>
            <person name="Schein J.E."/>
            <person name="Shvartsbeyn A."/>
            <person name="Shin H."/>
            <person name="Shumway M."/>
            <person name="Specht C.A."/>
            <person name="Suh B.B."/>
            <person name="Tenney A."/>
            <person name="Utterback T.R."/>
            <person name="Wickes B.L."/>
            <person name="Wortman J.R."/>
            <person name="Wye N.H."/>
            <person name="Kronstad J.W."/>
            <person name="Lodge J.K."/>
            <person name="Heitman J."/>
            <person name="Davis R.W."/>
            <person name="Fraser C.M."/>
            <person name="Hyman R.W."/>
        </authorList>
    </citation>
    <scope>NUCLEOTIDE SEQUENCE [LARGE SCALE GENOMIC DNA]</scope>
    <source>
        <strain>B-3501A</strain>
    </source>
</reference>
<evidence type="ECO:0000250" key="1"/>
<evidence type="ECO:0000256" key="2">
    <source>
        <dbReference type="SAM" id="MobiDB-lite"/>
    </source>
</evidence>
<evidence type="ECO:0000305" key="3"/>
<keyword id="KW-0489">Methyltransferase</keyword>
<keyword id="KW-0949">S-adenosyl-L-methionine</keyword>
<keyword id="KW-0808">Transferase</keyword>